<name>PSBH_TOBAC</name>
<accession>P06415</accession>
<protein>
    <recommendedName>
        <fullName evidence="2">Photosystem II reaction center protein H</fullName>
        <shortName evidence="2">PSII-H</shortName>
    </recommendedName>
    <alternativeName>
        <fullName evidence="2">Photosystem II 10 kDa phosphoprotein</fullName>
    </alternativeName>
</protein>
<gene>
    <name evidence="2" type="primary">psbH</name>
</gene>
<proteinExistence type="inferred from homology"/>
<feature type="initiator methionine" description="Removed" evidence="1">
    <location>
        <position position="1"/>
    </location>
</feature>
<feature type="chain" id="PRO_0000070538" description="Photosystem II reaction center protein H">
    <location>
        <begin position="2"/>
        <end position="73"/>
    </location>
</feature>
<feature type="transmembrane region" description="Helical" evidence="2">
    <location>
        <begin position="41"/>
        <end position="61"/>
    </location>
</feature>
<feature type="region of interest" description="Disordered" evidence="3">
    <location>
        <begin position="1"/>
        <end position="20"/>
    </location>
</feature>
<feature type="compositionally biased region" description="Polar residues" evidence="3">
    <location>
        <begin position="1"/>
        <end position="12"/>
    </location>
</feature>
<feature type="modified residue" description="Phosphothreonine" evidence="2">
    <location>
        <position position="3"/>
    </location>
</feature>
<feature type="modified residue" description="Phosphothreonine" evidence="2">
    <location>
        <position position="5"/>
    </location>
</feature>
<evidence type="ECO:0000250" key="1">
    <source>
        <dbReference type="UniProtKB" id="P56780"/>
    </source>
</evidence>
<evidence type="ECO:0000255" key="2">
    <source>
        <dbReference type="HAMAP-Rule" id="MF_00752"/>
    </source>
</evidence>
<evidence type="ECO:0000256" key="3">
    <source>
        <dbReference type="SAM" id="MobiDB-lite"/>
    </source>
</evidence>
<dbReference type="EMBL" id="Z00044">
    <property type="protein sequence ID" value="CAA77374.1"/>
    <property type="molecule type" value="Genomic_DNA"/>
</dbReference>
<dbReference type="PIR" id="A03475">
    <property type="entry name" value="F2NT0P"/>
</dbReference>
<dbReference type="RefSeq" id="NP_054529.1">
    <property type="nucleotide sequence ID" value="NC_001879.2"/>
</dbReference>
<dbReference type="SMR" id="P06415"/>
<dbReference type="GeneID" id="800417"/>
<dbReference type="KEGG" id="nta:800417"/>
<dbReference type="OMA" id="APEWETT"/>
<dbReference type="OrthoDB" id="1855002at2759"/>
<dbReference type="Proteomes" id="UP000084051">
    <property type="component" value="Unplaced"/>
</dbReference>
<dbReference type="GO" id="GO:0009535">
    <property type="term" value="C:chloroplast thylakoid membrane"/>
    <property type="evidence" value="ECO:0007669"/>
    <property type="project" value="UniProtKB-SubCell"/>
</dbReference>
<dbReference type="GO" id="GO:0009523">
    <property type="term" value="C:photosystem II"/>
    <property type="evidence" value="ECO:0007669"/>
    <property type="project" value="UniProtKB-KW"/>
</dbReference>
<dbReference type="GO" id="GO:0042301">
    <property type="term" value="F:phosphate ion binding"/>
    <property type="evidence" value="ECO:0007669"/>
    <property type="project" value="InterPro"/>
</dbReference>
<dbReference type="GO" id="GO:0015979">
    <property type="term" value="P:photosynthesis"/>
    <property type="evidence" value="ECO:0007669"/>
    <property type="project" value="UniProtKB-UniRule"/>
</dbReference>
<dbReference type="GO" id="GO:0050821">
    <property type="term" value="P:protein stabilization"/>
    <property type="evidence" value="ECO:0007669"/>
    <property type="project" value="InterPro"/>
</dbReference>
<dbReference type="FunFam" id="1.20.5.880:FF:000001">
    <property type="entry name" value="Photosystem II reaction center protein H"/>
    <property type="match status" value="1"/>
</dbReference>
<dbReference type="Gene3D" id="1.20.5.880">
    <property type="entry name" value="Photosystem II reaction center protein H"/>
    <property type="match status" value="1"/>
</dbReference>
<dbReference type="HAMAP" id="MF_00752">
    <property type="entry name" value="PSII_PsbH"/>
    <property type="match status" value="1"/>
</dbReference>
<dbReference type="InterPro" id="IPR001056">
    <property type="entry name" value="PSII_PsbH"/>
</dbReference>
<dbReference type="InterPro" id="IPR036863">
    <property type="entry name" value="PSII_PsbH_sf"/>
</dbReference>
<dbReference type="NCBIfam" id="NF002728">
    <property type="entry name" value="PRK02624.1"/>
    <property type="match status" value="1"/>
</dbReference>
<dbReference type="PANTHER" id="PTHR34469">
    <property type="entry name" value="PHOTOSYSTEM II REACTION CENTER PROTEIN H"/>
    <property type="match status" value="1"/>
</dbReference>
<dbReference type="PANTHER" id="PTHR34469:SF4">
    <property type="entry name" value="PHOTOSYSTEM II REACTION CENTER PROTEIN H"/>
    <property type="match status" value="1"/>
</dbReference>
<dbReference type="Pfam" id="PF00737">
    <property type="entry name" value="PsbH"/>
    <property type="match status" value="1"/>
</dbReference>
<dbReference type="SUPFAM" id="SSF161025">
    <property type="entry name" value="Photosystem II 10 kDa phosphoprotein PsbH"/>
    <property type="match status" value="1"/>
</dbReference>
<keyword id="KW-0150">Chloroplast</keyword>
<keyword id="KW-0472">Membrane</keyword>
<keyword id="KW-0597">Phosphoprotein</keyword>
<keyword id="KW-0602">Photosynthesis</keyword>
<keyword id="KW-0604">Photosystem II</keyword>
<keyword id="KW-0934">Plastid</keyword>
<keyword id="KW-1185">Reference proteome</keyword>
<keyword id="KW-0793">Thylakoid</keyword>
<keyword id="KW-0812">Transmembrane</keyword>
<keyword id="KW-1133">Transmembrane helix</keyword>
<organism>
    <name type="scientific">Nicotiana tabacum</name>
    <name type="common">Common tobacco</name>
    <dbReference type="NCBI Taxonomy" id="4097"/>
    <lineage>
        <taxon>Eukaryota</taxon>
        <taxon>Viridiplantae</taxon>
        <taxon>Streptophyta</taxon>
        <taxon>Embryophyta</taxon>
        <taxon>Tracheophyta</taxon>
        <taxon>Spermatophyta</taxon>
        <taxon>Magnoliopsida</taxon>
        <taxon>eudicotyledons</taxon>
        <taxon>Gunneridae</taxon>
        <taxon>Pentapetalae</taxon>
        <taxon>asterids</taxon>
        <taxon>lamiids</taxon>
        <taxon>Solanales</taxon>
        <taxon>Solanaceae</taxon>
        <taxon>Nicotianoideae</taxon>
        <taxon>Nicotianeae</taxon>
        <taxon>Nicotiana</taxon>
    </lineage>
</organism>
<reference key="1">
    <citation type="journal article" date="1986" name="EMBO J.">
        <title>The complete nucleotide sequence of the tobacco chloroplast genome: its gene organization and expression.</title>
        <authorList>
            <person name="Shinozaki K."/>
            <person name="Ohme M."/>
            <person name="Tanaka M."/>
            <person name="Wakasugi T."/>
            <person name="Hayashida N."/>
            <person name="Matsubayashi T."/>
            <person name="Zaita N."/>
            <person name="Chunwongse J."/>
            <person name="Obokata J."/>
            <person name="Yamaguchi-Shinozaki K."/>
            <person name="Ohto C."/>
            <person name="Torazawa K."/>
            <person name="Meng B.-Y."/>
            <person name="Sugita M."/>
            <person name="Deno H."/>
            <person name="Kamogashira T."/>
            <person name="Yamada K."/>
            <person name="Kusuda J."/>
            <person name="Takaiwa F."/>
            <person name="Kato A."/>
            <person name="Tohdoh N."/>
            <person name="Shimada H."/>
            <person name="Sugiura M."/>
        </authorList>
    </citation>
    <scope>NUCLEOTIDE SEQUENCE [LARGE SCALE GENOMIC DNA]</scope>
    <source>
        <strain>cv. Bright Yellow 4</strain>
    </source>
</reference>
<geneLocation type="chloroplast"/>
<comment type="function">
    <text evidence="2">One of the components of the core complex of photosystem II (PSII), required for its stability and/or assembly. PSII is a light-driven water:plastoquinone oxidoreductase that uses light energy to abstract electrons from H(2)O, generating O(2) and a proton gradient subsequently used for ATP formation. It consists of a core antenna complex that captures photons, and an electron transfer chain that converts photonic excitation into a charge separation.</text>
</comment>
<comment type="subunit">
    <text evidence="2">PSII is composed of 1 copy each of membrane proteins PsbA, PsbB, PsbC, PsbD, PsbE, PsbF, PsbH, PsbI, PsbJ, PsbK, PsbL, PsbM, PsbT, PsbX, PsbY, PsbZ, Psb30/Ycf12, at least 3 peripheral proteins of the oxygen-evolving complex and a large number of cofactors. It forms dimeric complexes.</text>
</comment>
<comment type="subcellular location">
    <subcellularLocation>
        <location evidence="2">Plastid</location>
        <location evidence="2">Chloroplast thylakoid membrane</location>
        <topology evidence="2">Single-pass membrane protein</topology>
    </subcellularLocation>
</comment>
<comment type="PTM">
    <text evidence="2">Phosphorylation is a light-dependent reaction catalyzed by a membrane-bound kinase; phosphorylation occurs on Thr residue(s) in the N-terminus of the protein.</text>
</comment>
<comment type="similarity">
    <text evidence="2">Belongs to the PsbH family.</text>
</comment>
<sequence length="73" mass="7759">MATQTVENSSRSGPRRTAVGDLLKPLNSEYGKVAPGWGTTPLMGVAMALFAVFLSIILEIYNSSVLLDGISMN</sequence>